<proteinExistence type="evidence at protein level"/>
<protein>
    <recommendedName>
        <fullName evidence="6">Serine/threonine protein phosphatase 2A 57 kDa regulatory subunit B' kappa isoform</fullName>
        <shortName evidence="5">OsB'kappa</shortName>
        <shortName evidence="6">PP2A, B' subunit, kappa isoform</shortName>
    </recommendedName>
</protein>
<sequence>MWKGFLSKLPRKTSASGRGADLDSGQCSNGAGNGNPIQRTSSCGSIPSGRSTSTIKRMSSAIFPSSVVAGIEPLVSFKDVPNSEKQNLFVSKLNLCCAVFDFSDPNKSSAEKDIKRQTLLDLIDYVDSSSSRFSEAVIAASSRMFAVNLFRVFPPNYRSSSSGGGEGEEEEPMFEPAWCHLQLVYELLLKFIGSSSLDAKVGKKYFDHSFIVKLLNLLDSEDPRERDCLKTILHRIYGKFMVHRPFIRKAVSNIFYHFVFETDRHNGIAELLEVFGSVISGFALPLKEEHKIFLWRVLVPLHKPKSVGVYLQQLTYCVTQFIEKDPKLASSVIIGLLRYWPITNSQKEVMFLSEIEEILETISTAEFQKCMVPLFRRIAQCIKSSHFQVAERALFIWNNDNVISLIAQNRQMIMPIIVPALEHNSQNHWNQAVLNLTDNVKKMFSEMDDVLFSACLVKYKEDEERQASLESKRRLTWEKLESAASFQPVTGHTAVLVGRQPSANLIATLI</sequence>
<reference key="1">
    <citation type="journal article" date="2002" name="Plant Physiol.">
        <title>Molecular characterization and evolution of the protein phosphatase 2A B' regulatory subunit family in plants.</title>
        <authorList>
            <person name="Terol J."/>
            <person name="Bargues M."/>
            <person name="Carrasco P."/>
            <person name="Perez-Alonso M."/>
            <person name="Paricio N."/>
        </authorList>
    </citation>
    <scope>NUCLEOTIDE SEQUENCE [GENOMIC DNA]</scope>
</reference>
<reference key="2">
    <citation type="journal article" date="2005" name="Mol. Genet. Genomics">
        <title>A fine physical map of the rice chromosome 5.</title>
        <authorList>
            <person name="Cheng C.-H."/>
            <person name="Chung M.C."/>
            <person name="Liu S.-M."/>
            <person name="Chen S.-K."/>
            <person name="Kao F.Y."/>
            <person name="Lin S.-J."/>
            <person name="Hsiao S.-H."/>
            <person name="Tseng I.C."/>
            <person name="Hsing Y.-I.C."/>
            <person name="Wu H.-P."/>
            <person name="Chen C.-S."/>
            <person name="Shaw J.-F."/>
            <person name="Wu J."/>
            <person name="Matsumoto T."/>
            <person name="Sasaki T."/>
            <person name="Chen H.-C."/>
            <person name="Chow T.-Y."/>
        </authorList>
    </citation>
    <scope>NUCLEOTIDE SEQUENCE [LARGE SCALE GENOMIC DNA]</scope>
    <source>
        <strain>cv. Nipponbare</strain>
    </source>
</reference>
<reference key="3">
    <citation type="journal article" date="2005" name="Nature">
        <title>The map-based sequence of the rice genome.</title>
        <authorList>
            <consortium name="International rice genome sequencing project (IRGSP)"/>
        </authorList>
    </citation>
    <scope>NUCLEOTIDE SEQUENCE [LARGE SCALE GENOMIC DNA]</scope>
    <source>
        <strain>cv. Nipponbare</strain>
    </source>
</reference>
<reference key="4">
    <citation type="journal article" date="2008" name="Nucleic Acids Res.">
        <title>The rice annotation project database (RAP-DB): 2008 update.</title>
        <authorList>
            <consortium name="The rice annotation project (RAP)"/>
        </authorList>
    </citation>
    <scope>GENOME REANNOTATION</scope>
    <source>
        <strain>cv. Nipponbare</strain>
    </source>
</reference>
<reference key="5">
    <citation type="journal article" date="2013" name="Rice">
        <title>Improvement of the Oryza sativa Nipponbare reference genome using next generation sequence and optical map data.</title>
        <authorList>
            <person name="Kawahara Y."/>
            <person name="de la Bastide M."/>
            <person name="Hamilton J.P."/>
            <person name="Kanamori H."/>
            <person name="McCombie W.R."/>
            <person name="Ouyang S."/>
            <person name="Schwartz D.C."/>
            <person name="Tanaka T."/>
            <person name="Wu J."/>
            <person name="Zhou S."/>
            <person name="Childs K.L."/>
            <person name="Davidson R.M."/>
            <person name="Lin H."/>
            <person name="Quesada-Ocampo L."/>
            <person name="Vaillancourt B."/>
            <person name="Sakai H."/>
            <person name="Lee S.S."/>
            <person name="Kim J."/>
            <person name="Numa H."/>
            <person name="Itoh T."/>
            <person name="Buell C.R."/>
            <person name="Matsumoto T."/>
        </authorList>
    </citation>
    <scope>GENOME REANNOTATION</scope>
    <source>
        <strain>cv. Nipponbare</strain>
    </source>
</reference>
<reference key="6">
    <citation type="journal article" date="2019" name="Plant Cell">
        <title>Mutual regulation of receptor-like kinase SIT1 and B'kappa-PP2A shapes the early response of rice to salt stress.</title>
        <authorList>
            <person name="Zhao J.L."/>
            <person name="Zhang L.Q."/>
            <person name="Liu N."/>
            <person name="Xu S.L."/>
            <person name="Yue Z.L."/>
            <person name="Zhang L.L."/>
            <person name="Deng Z.P."/>
            <person name="Burlingame A.L."/>
            <person name="Sun D.Y."/>
            <person name="Wang Z.Y."/>
            <person name="Sun Y."/>
            <person name="Zhang S.W."/>
        </authorList>
    </citation>
    <scope>IDENTIFICATION BY MASS SPECTROMETRY</scope>
    <scope>FUNCTION</scope>
    <scope>INTERACTION WITH SIT1</scope>
    <scope>SUBCELLULAR LOCATION</scope>
    <scope>TISSUE SPECIFICITY</scope>
    <scope>INDUCTION BY SALT STRESS</scope>
    <scope>PHOSPHORYLATION AT THR-476; THR-493; SER-502 AND THR-508</scope>
    <scope>MUTAGENESIS OF 330-SER-SER-331; THR-476; THR-493; SER-502 AND THR-508</scope>
    <scope>DISRUPTION PHENOTYPE</scope>
</reference>
<dbReference type="EMBL" id="AJ312313">
    <property type="protein sequence ID" value="CAC85920.1"/>
    <property type="molecule type" value="Genomic_DNA"/>
</dbReference>
<dbReference type="EMBL" id="AC093956">
    <property type="protein sequence ID" value="AAT58738.1"/>
    <property type="molecule type" value="Genomic_DNA"/>
</dbReference>
<dbReference type="EMBL" id="AP008211">
    <property type="protein sequence ID" value="BAF18186.1"/>
    <property type="status" value="ALT_SEQ"/>
    <property type="molecule type" value="Genomic_DNA"/>
</dbReference>
<dbReference type="EMBL" id="AP014961">
    <property type="protein sequence ID" value="BAS95256.1"/>
    <property type="status" value="ALT_SEQ"/>
    <property type="molecule type" value="Genomic_DNA"/>
</dbReference>
<dbReference type="SMR" id="Q6I621"/>
<dbReference type="FunCoup" id="Q6I621">
    <property type="interactions" value="3007"/>
</dbReference>
<dbReference type="STRING" id="39947.Q6I621"/>
<dbReference type="iPTMnet" id="Q6I621"/>
<dbReference type="PaxDb" id="39947-Q6I621"/>
<dbReference type="EnsemblPlants" id="Os05t0555100-02">
    <property type="protein sequence ID" value="Os05t0555100-02"/>
    <property type="gene ID" value="Os05g0555100"/>
</dbReference>
<dbReference type="GeneID" id="4339558"/>
<dbReference type="Gramene" id="Os05t0555100-02">
    <property type="protein sequence ID" value="Os05t0555100-02"/>
    <property type="gene ID" value="Os05g0555100"/>
</dbReference>
<dbReference type="KEGG" id="dosa:Os05g0555100"/>
<dbReference type="KEGG" id="osa:4339558"/>
<dbReference type="eggNOG" id="KOG2085">
    <property type="taxonomic scope" value="Eukaryota"/>
</dbReference>
<dbReference type="HOGENOM" id="CLU_012437_4_1_1"/>
<dbReference type="InParanoid" id="Q6I621"/>
<dbReference type="OrthoDB" id="10264446at2759"/>
<dbReference type="Proteomes" id="UP000000763">
    <property type="component" value="Chromosome 5"/>
</dbReference>
<dbReference type="Proteomes" id="UP000059680">
    <property type="component" value="Chromosome 5"/>
</dbReference>
<dbReference type="GO" id="GO:0005829">
    <property type="term" value="C:cytosol"/>
    <property type="evidence" value="ECO:0000314"/>
    <property type="project" value="UniProtKB"/>
</dbReference>
<dbReference type="GO" id="GO:0005886">
    <property type="term" value="C:plasma membrane"/>
    <property type="evidence" value="ECO:0007669"/>
    <property type="project" value="UniProtKB-SubCell"/>
</dbReference>
<dbReference type="GO" id="GO:0000159">
    <property type="term" value="C:protein phosphatase type 2A complex"/>
    <property type="evidence" value="ECO:0007669"/>
    <property type="project" value="InterPro"/>
</dbReference>
<dbReference type="GO" id="GO:0072542">
    <property type="term" value="F:protein phosphatase activator activity"/>
    <property type="evidence" value="ECO:0000318"/>
    <property type="project" value="GO_Central"/>
</dbReference>
<dbReference type="GO" id="GO:0019888">
    <property type="term" value="F:protein phosphatase regulator activity"/>
    <property type="evidence" value="ECO:0000314"/>
    <property type="project" value="UniProtKB"/>
</dbReference>
<dbReference type="GO" id="GO:0051177">
    <property type="term" value="P:meiotic sister chromatid cohesion"/>
    <property type="evidence" value="ECO:0000318"/>
    <property type="project" value="GO_Central"/>
</dbReference>
<dbReference type="GO" id="GO:1901002">
    <property type="term" value="P:positive regulation of response to salt stress"/>
    <property type="evidence" value="ECO:0000315"/>
    <property type="project" value="UniProtKB"/>
</dbReference>
<dbReference type="GO" id="GO:0007165">
    <property type="term" value="P:signal transduction"/>
    <property type="evidence" value="ECO:0007669"/>
    <property type="project" value="InterPro"/>
</dbReference>
<dbReference type="FunFam" id="1.25.10.10:FF:000041">
    <property type="entry name" value="Serine/threonine protein phosphatase 2A regulatory subunit"/>
    <property type="match status" value="1"/>
</dbReference>
<dbReference type="Gene3D" id="1.25.10.10">
    <property type="entry name" value="Leucine-rich Repeat Variant"/>
    <property type="match status" value="1"/>
</dbReference>
<dbReference type="InterPro" id="IPR011989">
    <property type="entry name" value="ARM-like"/>
</dbReference>
<dbReference type="InterPro" id="IPR016024">
    <property type="entry name" value="ARM-type_fold"/>
</dbReference>
<dbReference type="InterPro" id="IPR002554">
    <property type="entry name" value="PP2A_B56"/>
</dbReference>
<dbReference type="PANTHER" id="PTHR10257">
    <property type="entry name" value="SERINE/THREONINE PROTEIN PHOSPHATASE 2A PP2A REGULATORY SUBUNIT B"/>
    <property type="match status" value="1"/>
</dbReference>
<dbReference type="PANTHER" id="PTHR10257:SF31">
    <property type="entry name" value="SERINE_THREONINE PROTEIN PHOSPHATASE 2A 57 KDA REGULATORY SUBUNIT B' KAPPA ISOFORM"/>
    <property type="match status" value="1"/>
</dbReference>
<dbReference type="Pfam" id="PF01603">
    <property type="entry name" value="B56"/>
    <property type="match status" value="1"/>
</dbReference>
<dbReference type="PIRSF" id="PIRSF028043">
    <property type="entry name" value="PP2A_B56"/>
    <property type="match status" value="1"/>
</dbReference>
<dbReference type="SUPFAM" id="SSF48371">
    <property type="entry name" value="ARM repeat"/>
    <property type="match status" value="1"/>
</dbReference>
<organism>
    <name type="scientific">Oryza sativa subsp. japonica</name>
    <name type="common">Rice</name>
    <dbReference type="NCBI Taxonomy" id="39947"/>
    <lineage>
        <taxon>Eukaryota</taxon>
        <taxon>Viridiplantae</taxon>
        <taxon>Streptophyta</taxon>
        <taxon>Embryophyta</taxon>
        <taxon>Tracheophyta</taxon>
        <taxon>Spermatophyta</taxon>
        <taxon>Magnoliopsida</taxon>
        <taxon>Liliopsida</taxon>
        <taxon>Poales</taxon>
        <taxon>Poaceae</taxon>
        <taxon>BOP clade</taxon>
        <taxon>Oryzoideae</taxon>
        <taxon>Oryzeae</taxon>
        <taxon>Oryzinae</taxon>
        <taxon>Oryza</taxon>
        <taxon>Oryza sativa</taxon>
    </lineage>
</organism>
<keyword id="KW-1003">Cell membrane</keyword>
<keyword id="KW-0963">Cytoplasm</keyword>
<keyword id="KW-0472">Membrane</keyword>
<keyword id="KW-0597">Phosphoprotein</keyword>
<keyword id="KW-1185">Reference proteome</keyword>
<keyword id="KW-0346">Stress response</keyword>
<comment type="function">
    <text evidence="3">B regulatory subunit of phosphatase 2A (PP2A) involved in salt stress response (PubMed:31221736). Under salt stress conditions, required for the catalytic activity of PP2A and the dephosphorylation of SIT1, a negative regulator of salt tolerance (PubMed:31221736). Dephosphorylation of SIT1 turns off salt-induced SIT1 activity directly, which has a positive effect on salt tolerance (PubMed:31221736).</text>
</comment>
<comment type="subunit">
    <text evidence="1 3">PP2A consists of a common heteromeric enzyme, composed of a catalytic subunit (subunits C), a constant regulatory subunit (subunit A), and a variety of regulatory subunits such as subunits B (the R2/B/PR55/B55, R3/B''/PR72/PR130/PR59 and R5/B'/B56 families) (By similarity). Interacts with SIT1 (PubMed:31221736).</text>
</comment>
<comment type="subcellular location">
    <subcellularLocation>
        <location evidence="3">Cytoplasm</location>
        <location evidence="3">Cytosol</location>
    </subcellularLocation>
    <subcellularLocation>
        <location evidence="3">Cell membrane</location>
        <topology evidence="7">Peripheral membrane protein</topology>
    </subcellularLocation>
    <text evidence="3">The partial localization to the plasma membrane may be due to its association with SIT1.</text>
</comment>
<comment type="tissue specificity">
    <text evidence="3">Expressed in root stele and epidermal cells.</text>
</comment>
<comment type="induction">
    <text evidence="3">Induced by salt stress (at protein level).</text>
</comment>
<comment type="PTM">
    <text evidence="3">Phosphorylated at Thr-476, Thr-493, Ser-502 and Thr-508 by SIT1.</text>
</comment>
<comment type="disruption phenotype">
    <text evidence="3">No visible phenotype under normal growth conditions, but mutant plants exhibit increased sensitivity to salt stress.</text>
</comment>
<comment type="similarity">
    <text evidence="6">Belongs to the phosphatase 2A regulatory subunit B56 family.</text>
</comment>
<comment type="sequence caution" evidence="6">
    <conflict type="erroneous gene model prediction">
        <sequence resource="EMBL-CDS" id="BAF18186"/>
    </conflict>
</comment>
<comment type="sequence caution" evidence="6">
    <conflict type="erroneous gene model prediction">
        <sequence resource="EMBL-CDS" id="BAS95256"/>
    </conflict>
</comment>
<feature type="chain" id="PRO_0000448552" description="Serine/threonine protein phosphatase 2A 57 kDa regulatory subunit B' kappa isoform">
    <location>
        <begin position="1"/>
        <end position="510"/>
    </location>
</feature>
<feature type="region of interest" description="Disordered" evidence="2">
    <location>
        <begin position="1"/>
        <end position="51"/>
    </location>
</feature>
<feature type="compositionally biased region" description="Polar residues" evidence="2">
    <location>
        <begin position="25"/>
        <end position="51"/>
    </location>
</feature>
<feature type="modified residue" description="Phosphothreonine" evidence="3">
    <location>
        <position position="476"/>
    </location>
</feature>
<feature type="modified residue" description="Phosphothreonine" evidence="3">
    <location>
        <position position="493"/>
    </location>
</feature>
<feature type="modified residue" description="Phosphoserine" evidence="3">
    <location>
        <position position="502"/>
    </location>
</feature>
<feature type="modified residue" description="Phosphothreonine" evidence="3">
    <location>
        <position position="508"/>
    </location>
</feature>
<feature type="mutagenesis site" description="No effect on salt-induced B'KAPPA protein accumulation." evidence="3">
    <original>SS</original>
    <variation>AA</variation>
    <location>
        <begin position="330"/>
        <end position="331"/>
    </location>
</feature>
<feature type="mutagenesis site" description="No effect on salt-induced B'KAPPA protein accumulation." evidence="3">
    <original>T</original>
    <variation>A</variation>
    <location>
        <position position="476"/>
    </location>
</feature>
<feature type="mutagenesis site" description="No effect on salt-induced B'KAPPA protein accumulation." evidence="3">
    <original>T</original>
    <variation>A</variation>
    <location>
        <position position="493"/>
    </location>
</feature>
<feature type="mutagenesis site" description="Abolishes salt-induced B'KAPPA protein accumulation." evidence="3">
    <original>S</original>
    <variation>A</variation>
    <location>
        <position position="502"/>
    </location>
</feature>
<feature type="mutagenesis site" description="Reduces salt-induced B'KAPPA protein accumulation." evidence="3">
    <original>T</original>
    <variation>A</variation>
    <location>
        <position position="508"/>
    </location>
</feature>
<evidence type="ECO:0000250" key="1">
    <source>
        <dbReference type="UniProtKB" id="Q13362"/>
    </source>
</evidence>
<evidence type="ECO:0000256" key="2">
    <source>
        <dbReference type="SAM" id="MobiDB-lite"/>
    </source>
</evidence>
<evidence type="ECO:0000269" key="3">
    <source>
    </source>
</evidence>
<evidence type="ECO:0000303" key="4">
    <source>
    </source>
</evidence>
<evidence type="ECO:0000303" key="5">
    <source>
    </source>
</evidence>
<evidence type="ECO:0000305" key="6"/>
<evidence type="ECO:0000305" key="7">
    <source>
    </source>
</evidence>
<evidence type="ECO:0000312" key="8">
    <source>
        <dbReference type="EMBL" id="AAT58738.1"/>
    </source>
</evidence>
<evidence type="ECO:0000312" key="9">
    <source>
        <dbReference type="EMBL" id="BAF18186.1"/>
    </source>
</evidence>
<gene>
    <name evidence="4" type="primary">B'KAPPA</name>
    <name evidence="9" type="ordered locus">Os05g0555100</name>
    <name evidence="6" type="ordered locus">LOC_Os05g48150</name>
    <name evidence="8" type="ORF">OJ1263_E10.15</name>
</gene>
<name>2A5K_ORYSJ</name>
<accession>Q6I621</accession>
<accession>Q0DG37</accession>
<accession>Q8L6I7</accession>